<dbReference type="EMBL" id="CP000479">
    <property type="protein sequence ID" value="ABK69504.1"/>
    <property type="molecule type" value="Genomic_DNA"/>
</dbReference>
<dbReference type="RefSeq" id="WP_003873519.1">
    <property type="nucleotide sequence ID" value="NC_008595.1"/>
</dbReference>
<dbReference type="SMR" id="A0QL19"/>
<dbReference type="GeneID" id="97439279"/>
<dbReference type="KEGG" id="mav:MAV_4472"/>
<dbReference type="HOGENOM" id="CLU_122625_1_3_11"/>
<dbReference type="Proteomes" id="UP000001574">
    <property type="component" value="Chromosome"/>
</dbReference>
<dbReference type="GO" id="GO:1990904">
    <property type="term" value="C:ribonucleoprotein complex"/>
    <property type="evidence" value="ECO:0007669"/>
    <property type="project" value="UniProtKB-KW"/>
</dbReference>
<dbReference type="GO" id="GO:0005840">
    <property type="term" value="C:ribosome"/>
    <property type="evidence" value="ECO:0007669"/>
    <property type="project" value="UniProtKB-KW"/>
</dbReference>
<dbReference type="GO" id="GO:0003735">
    <property type="term" value="F:structural constituent of ribosome"/>
    <property type="evidence" value="ECO:0007669"/>
    <property type="project" value="InterPro"/>
</dbReference>
<dbReference type="GO" id="GO:0000049">
    <property type="term" value="F:tRNA binding"/>
    <property type="evidence" value="ECO:0007669"/>
    <property type="project" value="UniProtKB-UniRule"/>
</dbReference>
<dbReference type="GO" id="GO:0006412">
    <property type="term" value="P:translation"/>
    <property type="evidence" value="ECO:0007669"/>
    <property type="project" value="UniProtKB-UniRule"/>
</dbReference>
<dbReference type="FunFam" id="3.30.70.600:FF:000001">
    <property type="entry name" value="30S ribosomal protein S10"/>
    <property type="match status" value="1"/>
</dbReference>
<dbReference type="Gene3D" id="3.30.70.600">
    <property type="entry name" value="Ribosomal protein S10 domain"/>
    <property type="match status" value="1"/>
</dbReference>
<dbReference type="HAMAP" id="MF_00508">
    <property type="entry name" value="Ribosomal_uS10"/>
    <property type="match status" value="1"/>
</dbReference>
<dbReference type="InterPro" id="IPR001848">
    <property type="entry name" value="Ribosomal_uS10"/>
</dbReference>
<dbReference type="InterPro" id="IPR018268">
    <property type="entry name" value="Ribosomal_uS10_CS"/>
</dbReference>
<dbReference type="InterPro" id="IPR027486">
    <property type="entry name" value="Ribosomal_uS10_dom"/>
</dbReference>
<dbReference type="InterPro" id="IPR036838">
    <property type="entry name" value="Ribosomal_uS10_dom_sf"/>
</dbReference>
<dbReference type="NCBIfam" id="NF001861">
    <property type="entry name" value="PRK00596.1"/>
    <property type="match status" value="1"/>
</dbReference>
<dbReference type="NCBIfam" id="TIGR01049">
    <property type="entry name" value="rpsJ_bact"/>
    <property type="match status" value="1"/>
</dbReference>
<dbReference type="PANTHER" id="PTHR11700">
    <property type="entry name" value="30S RIBOSOMAL PROTEIN S10 FAMILY MEMBER"/>
    <property type="match status" value="1"/>
</dbReference>
<dbReference type="Pfam" id="PF00338">
    <property type="entry name" value="Ribosomal_S10"/>
    <property type="match status" value="1"/>
</dbReference>
<dbReference type="PRINTS" id="PR00971">
    <property type="entry name" value="RIBOSOMALS10"/>
</dbReference>
<dbReference type="SMART" id="SM01403">
    <property type="entry name" value="Ribosomal_S10"/>
    <property type="match status" value="1"/>
</dbReference>
<dbReference type="SUPFAM" id="SSF54999">
    <property type="entry name" value="Ribosomal protein S10"/>
    <property type="match status" value="1"/>
</dbReference>
<dbReference type="PROSITE" id="PS00361">
    <property type="entry name" value="RIBOSOMAL_S10"/>
    <property type="match status" value="1"/>
</dbReference>
<feature type="chain" id="PRO_1000015058" description="Small ribosomal subunit protein uS10">
    <location>
        <begin position="1"/>
        <end position="101"/>
    </location>
</feature>
<protein>
    <recommendedName>
        <fullName evidence="1">Small ribosomal subunit protein uS10</fullName>
    </recommendedName>
    <alternativeName>
        <fullName evidence="2">30S ribosomal protein S10</fullName>
    </alternativeName>
</protein>
<name>RS10_MYCA1</name>
<reference key="1">
    <citation type="submission" date="2006-10" db="EMBL/GenBank/DDBJ databases">
        <authorList>
            <person name="Fleischmann R.D."/>
            <person name="Dodson R.J."/>
            <person name="Haft D.H."/>
            <person name="Merkel J.S."/>
            <person name="Nelson W.C."/>
            <person name="Fraser C.M."/>
        </authorList>
    </citation>
    <scope>NUCLEOTIDE SEQUENCE [LARGE SCALE GENOMIC DNA]</scope>
    <source>
        <strain>104</strain>
    </source>
</reference>
<gene>
    <name evidence="1" type="primary">rpsJ</name>
    <name type="ordered locus">MAV_4472</name>
</gene>
<evidence type="ECO:0000255" key="1">
    <source>
        <dbReference type="HAMAP-Rule" id="MF_00508"/>
    </source>
</evidence>
<evidence type="ECO:0000305" key="2"/>
<accession>A0QL19</accession>
<comment type="function">
    <text evidence="1">Involved in the binding of tRNA to the ribosomes.</text>
</comment>
<comment type="subunit">
    <text evidence="1">Part of the 30S ribosomal subunit.</text>
</comment>
<comment type="similarity">
    <text evidence="1">Belongs to the universal ribosomal protein uS10 family.</text>
</comment>
<sequence length="101" mass="11431">MAGQKIRIRLKAYDHEAIDASARKIVETVVRTGASVVGPVPLPTEKNVYCVIRSPHKYKDSREHFEMRTHKRLIDILDPTPKTVDALMRIDLPASVDVNIQ</sequence>
<organism>
    <name type="scientific">Mycobacterium avium (strain 104)</name>
    <dbReference type="NCBI Taxonomy" id="243243"/>
    <lineage>
        <taxon>Bacteria</taxon>
        <taxon>Bacillati</taxon>
        <taxon>Actinomycetota</taxon>
        <taxon>Actinomycetes</taxon>
        <taxon>Mycobacteriales</taxon>
        <taxon>Mycobacteriaceae</taxon>
        <taxon>Mycobacterium</taxon>
        <taxon>Mycobacterium avium complex (MAC)</taxon>
    </lineage>
</organism>
<proteinExistence type="inferred from homology"/>
<keyword id="KW-0687">Ribonucleoprotein</keyword>
<keyword id="KW-0689">Ribosomal protein</keyword>